<proteinExistence type="inferred from homology"/>
<gene>
    <name evidence="1" type="primary">pyrE</name>
    <name type="ordered locus">BSUIS_A0681</name>
</gene>
<sequence length="192" mass="20733">MNTDDVLAVFREAGAILEGHFILTSGLRSPVFLQKARVFMHADKTEKLCKALAEKIRAADLGPIDYVVGPAIGGLIPSYETSRHLGVPSVWVERENGVFRLRRFDVPKGARVVIVEDIVTTGLSIRETIDCMKDLGIEVVAAACIVDRSAGKADVGTRLISLAEYEVPAYPADKLPPELAAIPAVKPGSRNI</sequence>
<organism>
    <name type="scientific">Brucella suis (strain ATCC 23445 / NCTC 10510)</name>
    <dbReference type="NCBI Taxonomy" id="470137"/>
    <lineage>
        <taxon>Bacteria</taxon>
        <taxon>Pseudomonadati</taxon>
        <taxon>Pseudomonadota</taxon>
        <taxon>Alphaproteobacteria</taxon>
        <taxon>Hyphomicrobiales</taxon>
        <taxon>Brucellaceae</taxon>
        <taxon>Brucella/Ochrobactrum group</taxon>
        <taxon>Brucella</taxon>
    </lineage>
</organism>
<reference key="1">
    <citation type="submission" date="2007-12" db="EMBL/GenBank/DDBJ databases">
        <title>Brucella suis ATCC 23445 whole genome shotgun sequencing project.</title>
        <authorList>
            <person name="Setubal J.C."/>
            <person name="Bowns C."/>
            <person name="Boyle S."/>
            <person name="Crasta O.R."/>
            <person name="Czar M.J."/>
            <person name="Dharmanolla C."/>
            <person name="Gillespie J.J."/>
            <person name="Kenyon R.W."/>
            <person name="Lu J."/>
            <person name="Mane S."/>
            <person name="Mohapatra S."/>
            <person name="Nagrani S."/>
            <person name="Purkayastha A."/>
            <person name="Rajasimha H.K."/>
            <person name="Shallom J.M."/>
            <person name="Shallom S."/>
            <person name="Shukla M."/>
            <person name="Snyder E.E."/>
            <person name="Sobral B.W."/>
            <person name="Wattam A.R."/>
            <person name="Will R."/>
            <person name="Williams K."/>
            <person name="Yoo H."/>
            <person name="Bruce D."/>
            <person name="Detter C."/>
            <person name="Munk C."/>
            <person name="Brettin T.S."/>
        </authorList>
    </citation>
    <scope>NUCLEOTIDE SEQUENCE [LARGE SCALE GENOMIC DNA]</scope>
    <source>
        <strain>ATCC 23445 / NCTC 10510</strain>
    </source>
</reference>
<keyword id="KW-0328">Glycosyltransferase</keyword>
<keyword id="KW-0460">Magnesium</keyword>
<keyword id="KW-0665">Pyrimidine biosynthesis</keyword>
<keyword id="KW-0808">Transferase</keyword>
<dbReference type="EC" id="2.4.2.10" evidence="1"/>
<dbReference type="EMBL" id="CP000911">
    <property type="protein sequence ID" value="ABY37759.1"/>
    <property type="molecule type" value="Genomic_DNA"/>
</dbReference>
<dbReference type="RefSeq" id="WP_002963797.1">
    <property type="nucleotide sequence ID" value="NC_010169.1"/>
</dbReference>
<dbReference type="SMR" id="B0CKX9"/>
<dbReference type="GeneID" id="97534018"/>
<dbReference type="KEGG" id="bmt:BSUIS_A0681"/>
<dbReference type="HOGENOM" id="CLU_074878_3_0_5"/>
<dbReference type="UniPathway" id="UPA00070">
    <property type="reaction ID" value="UER00119"/>
</dbReference>
<dbReference type="Proteomes" id="UP000008545">
    <property type="component" value="Chromosome I"/>
</dbReference>
<dbReference type="GO" id="GO:0000287">
    <property type="term" value="F:magnesium ion binding"/>
    <property type="evidence" value="ECO:0007669"/>
    <property type="project" value="UniProtKB-UniRule"/>
</dbReference>
<dbReference type="GO" id="GO:0004588">
    <property type="term" value="F:orotate phosphoribosyltransferase activity"/>
    <property type="evidence" value="ECO:0007669"/>
    <property type="project" value="UniProtKB-UniRule"/>
</dbReference>
<dbReference type="GO" id="GO:0044205">
    <property type="term" value="P:'de novo' UMP biosynthetic process"/>
    <property type="evidence" value="ECO:0007669"/>
    <property type="project" value="UniProtKB-UniRule"/>
</dbReference>
<dbReference type="GO" id="GO:0019856">
    <property type="term" value="P:pyrimidine nucleobase biosynthetic process"/>
    <property type="evidence" value="ECO:0007669"/>
    <property type="project" value="InterPro"/>
</dbReference>
<dbReference type="CDD" id="cd06223">
    <property type="entry name" value="PRTases_typeI"/>
    <property type="match status" value="1"/>
</dbReference>
<dbReference type="Gene3D" id="3.40.50.2020">
    <property type="match status" value="1"/>
</dbReference>
<dbReference type="HAMAP" id="MF_01208">
    <property type="entry name" value="PyrE"/>
    <property type="match status" value="1"/>
</dbReference>
<dbReference type="InterPro" id="IPR023031">
    <property type="entry name" value="OPRT"/>
</dbReference>
<dbReference type="InterPro" id="IPR006273">
    <property type="entry name" value="Orotate_PRibTrfase_bac"/>
</dbReference>
<dbReference type="InterPro" id="IPR000836">
    <property type="entry name" value="PRibTrfase_dom"/>
</dbReference>
<dbReference type="InterPro" id="IPR029057">
    <property type="entry name" value="PRTase-like"/>
</dbReference>
<dbReference type="NCBIfam" id="TIGR01367">
    <property type="entry name" value="pyrE_Therm"/>
    <property type="match status" value="1"/>
</dbReference>
<dbReference type="PANTHER" id="PTHR19278">
    <property type="entry name" value="OROTATE PHOSPHORIBOSYLTRANSFERASE"/>
    <property type="match status" value="1"/>
</dbReference>
<dbReference type="PANTHER" id="PTHR19278:SF9">
    <property type="entry name" value="URIDINE 5'-MONOPHOSPHATE SYNTHASE"/>
    <property type="match status" value="1"/>
</dbReference>
<dbReference type="Pfam" id="PF00156">
    <property type="entry name" value="Pribosyltran"/>
    <property type="match status" value="1"/>
</dbReference>
<dbReference type="SUPFAM" id="SSF53271">
    <property type="entry name" value="PRTase-like"/>
    <property type="match status" value="1"/>
</dbReference>
<dbReference type="PROSITE" id="PS00103">
    <property type="entry name" value="PUR_PYR_PR_TRANSFER"/>
    <property type="match status" value="1"/>
</dbReference>
<feature type="chain" id="PRO_1000085540" description="Orotate phosphoribosyltransferase">
    <location>
        <begin position="1"/>
        <end position="192"/>
    </location>
</feature>
<feature type="binding site" evidence="1">
    <location>
        <begin position="116"/>
        <end position="124"/>
    </location>
    <ligand>
        <name>5-phospho-alpha-D-ribose 1-diphosphate</name>
        <dbReference type="ChEBI" id="CHEBI:58017"/>
    </ligand>
</feature>
<feature type="binding site" evidence="1">
    <location>
        <position position="120"/>
    </location>
    <ligand>
        <name>orotate</name>
        <dbReference type="ChEBI" id="CHEBI:30839"/>
    </ligand>
</feature>
<feature type="binding site" evidence="1">
    <location>
        <position position="148"/>
    </location>
    <ligand>
        <name>orotate</name>
        <dbReference type="ChEBI" id="CHEBI:30839"/>
    </ligand>
</feature>
<evidence type="ECO:0000255" key="1">
    <source>
        <dbReference type="HAMAP-Rule" id="MF_01208"/>
    </source>
</evidence>
<accession>B0CKX9</accession>
<protein>
    <recommendedName>
        <fullName evidence="1">Orotate phosphoribosyltransferase</fullName>
        <shortName evidence="1">OPRT</shortName>
        <shortName evidence="1">OPRTase</shortName>
        <ecNumber evidence="1">2.4.2.10</ecNumber>
    </recommendedName>
</protein>
<name>PYRE_BRUSI</name>
<comment type="function">
    <text evidence="1">Catalyzes the transfer of a ribosyl phosphate group from 5-phosphoribose 1-diphosphate to orotate, leading to the formation of orotidine monophosphate (OMP).</text>
</comment>
<comment type="catalytic activity">
    <reaction evidence="1">
        <text>orotidine 5'-phosphate + diphosphate = orotate + 5-phospho-alpha-D-ribose 1-diphosphate</text>
        <dbReference type="Rhea" id="RHEA:10380"/>
        <dbReference type="ChEBI" id="CHEBI:30839"/>
        <dbReference type="ChEBI" id="CHEBI:33019"/>
        <dbReference type="ChEBI" id="CHEBI:57538"/>
        <dbReference type="ChEBI" id="CHEBI:58017"/>
        <dbReference type="EC" id="2.4.2.10"/>
    </reaction>
</comment>
<comment type="cofactor">
    <cofactor evidence="1">
        <name>Mg(2+)</name>
        <dbReference type="ChEBI" id="CHEBI:18420"/>
    </cofactor>
</comment>
<comment type="pathway">
    <text evidence="1">Pyrimidine metabolism; UMP biosynthesis via de novo pathway; UMP from orotate: step 1/2.</text>
</comment>
<comment type="subunit">
    <text evidence="1">Homodimer.</text>
</comment>
<comment type="similarity">
    <text evidence="1">Belongs to the purine/pyrimidine phosphoribosyltransferase family. PyrE subfamily.</text>
</comment>